<name>MDH_RALN1</name>
<dbReference type="EC" id="1.1.1.37" evidence="2"/>
<dbReference type="EMBL" id="AL646052">
    <property type="protein sequence ID" value="CAD15700.1"/>
    <property type="molecule type" value="Genomic_DNA"/>
</dbReference>
<dbReference type="RefSeq" id="WP_011001933.1">
    <property type="nucleotide sequence ID" value="NC_003295.1"/>
</dbReference>
<dbReference type="SMR" id="Q8XXW5"/>
<dbReference type="STRING" id="267608.RSc1998"/>
<dbReference type="EnsemblBacteria" id="CAD15700">
    <property type="protein sequence ID" value="CAD15700"/>
    <property type="gene ID" value="RSc1998"/>
</dbReference>
<dbReference type="KEGG" id="rso:RSc1998"/>
<dbReference type="eggNOG" id="COG0039">
    <property type="taxonomic scope" value="Bacteria"/>
</dbReference>
<dbReference type="HOGENOM" id="CLU_040727_2_0_4"/>
<dbReference type="Proteomes" id="UP000001436">
    <property type="component" value="Chromosome"/>
</dbReference>
<dbReference type="GO" id="GO:0030060">
    <property type="term" value="F:L-malate dehydrogenase (NAD+) activity"/>
    <property type="evidence" value="ECO:0007669"/>
    <property type="project" value="UniProtKB-UniRule"/>
</dbReference>
<dbReference type="GO" id="GO:0006108">
    <property type="term" value="P:malate metabolic process"/>
    <property type="evidence" value="ECO:0007669"/>
    <property type="project" value="InterPro"/>
</dbReference>
<dbReference type="GO" id="GO:0006099">
    <property type="term" value="P:tricarboxylic acid cycle"/>
    <property type="evidence" value="ECO:0007669"/>
    <property type="project" value="UniProtKB-UniRule"/>
</dbReference>
<dbReference type="CDD" id="cd01338">
    <property type="entry name" value="MDH_chloroplast-like"/>
    <property type="match status" value="1"/>
</dbReference>
<dbReference type="FunFam" id="3.40.50.720:FF:000010">
    <property type="entry name" value="Malate dehydrogenase"/>
    <property type="match status" value="1"/>
</dbReference>
<dbReference type="FunFam" id="3.90.110.10:FF:000002">
    <property type="entry name" value="Malate dehydrogenase"/>
    <property type="match status" value="1"/>
</dbReference>
<dbReference type="Gene3D" id="3.90.110.10">
    <property type="entry name" value="Lactate dehydrogenase/glycoside hydrolase, family 4, C-terminal"/>
    <property type="match status" value="1"/>
</dbReference>
<dbReference type="Gene3D" id="3.40.50.720">
    <property type="entry name" value="NAD(P)-binding Rossmann-like Domain"/>
    <property type="match status" value="1"/>
</dbReference>
<dbReference type="HAMAP" id="MF_01517">
    <property type="entry name" value="Malate_dehydrog_2"/>
    <property type="match status" value="1"/>
</dbReference>
<dbReference type="InterPro" id="IPR001557">
    <property type="entry name" value="L-lactate/malate_DH"/>
</dbReference>
<dbReference type="InterPro" id="IPR022383">
    <property type="entry name" value="Lactate/malate_DH_C"/>
</dbReference>
<dbReference type="InterPro" id="IPR001236">
    <property type="entry name" value="Lactate/malate_DH_N"/>
</dbReference>
<dbReference type="InterPro" id="IPR015955">
    <property type="entry name" value="Lactate_DH/Glyco_Ohase_4_C"/>
</dbReference>
<dbReference type="InterPro" id="IPR010945">
    <property type="entry name" value="Malate_DH_type2"/>
</dbReference>
<dbReference type="InterPro" id="IPR036291">
    <property type="entry name" value="NAD(P)-bd_dom_sf"/>
</dbReference>
<dbReference type="NCBIfam" id="TIGR01759">
    <property type="entry name" value="MalateDH-SF1"/>
    <property type="match status" value="1"/>
</dbReference>
<dbReference type="NCBIfam" id="NF003916">
    <property type="entry name" value="PRK05442.1"/>
    <property type="match status" value="1"/>
</dbReference>
<dbReference type="PANTHER" id="PTHR23382">
    <property type="entry name" value="MALATE DEHYDROGENASE"/>
    <property type="match status" value="1"/>
</dbReference>
<dbReference type="Pfam" id="PF02866">
    <property type="entry name" value="Ldh_1_C"/>
    <property type="match status" value="1"/>
</dbReference>
<dbReference type="Pfam" id="PF00056">
    <property type="entry name" value="Ldh_1_N"/>
    <property type="match status" value="1"/>
</dbReference>
<dbReference type="PIRSF" id="PIRSF000102">
    <property type="entry name" value="Lac_mal_DH"/>
    <property type="match status" value="1"/>
</dbReference>
<dbReference type="SUPFAM" id="SSF56327">
    <property type="entry name" value="LDH C-terminal domain-like"/>
    <property type="match status" value="1"/>
</dbReference>
<dbReference type="SUPFAM" id="SSF51735">
    <property type="entry name" value="NAD(P)-binding Rossmann-fold domains"/>
    <property type="match status" value="1"/>
</dbReference>
<sequence>MAKAPMRVAVTGAAGQIGYALLFRIAAGEMLGKDQPVILQLLEIPDEKAQKALKGVMMEIEDCAFPLLAGMEAHADPMTAFKDVDVALLVGARPRGPGMERKDLLSANAQIFTAQGKALNAVASRNVKVLVVGNPANTNAYIAMKSAPDLPRENFTAMLRLDHNRALSQIAAKTGKPVSSIEKLFVWGNHSPTMYADYRYATIDGQSVKDMINDPVWNNDVFLPTVGKRGAAIIEARGLSSAASAANAAIDHVRDWVLGSNGKIVTMGIPSNGDYEIPQDVMFGFPVTTANGKYEVVKGFEVDAYSREKINITLKELEEERAGVQHLLG</sequence>
<feature type="initiator methionine" description="Removed" evidence="1">
    <location>
        <position position="1"/>
    </location>
</feature>
<feature type="chain" id="PRO_0000113391" description="Malate dehydrogenase">
    <location>
        <begin position="2"/>
        <end position="329"/>
    </location>
</feature>
<feature type="active site" description="Proton acceptor" evidence="2">
    <location>
        <position position="190"/>
    </location>
</feature>
<feature type="binding site" evidence="2">
    <location>
        <begin position="12"/>
        <end position="18"/>
    </location>
    <ligand>
        <name>NAD(+)</name>
        <dbReference type="ChEBI" id="CHEBI:57540"/>
    </ligand>
</feature>
<feature type="binding site" evidence="2">
    <location>
        <position position="95"/>
    </location>
    <ligand>
        <name>substrate</name>
    </ligand>
</feature>
<feature type="binding site" evidence="2">
    <location>
        <position position="101"/>
    </location>
    <ligand>
        <name>substrate</name>
    </ligand>
</feature>
<feature type="binding site" evidence="2">
    <location>
        <position position="108"/>
    </location>
    <ligand>
        <name>NAD(+)</name>
        <dbReference type="ChEBI" id="CHEBI:57540"/>
    </ligand>
</feature>
<feature type="binding site" evidence="2">
    <location>
        <position position="115"/>
    </location>
    <ligand>
        <name>NAD(+)</name>
        <dbReference type="ChEBI" id="CHEBI:57540"/>
    </ligand>
</feature>
<feature type="binding site" evidence="2">
    <location>
        <begin position="132"/>
        <end position="134"/>
    </location>
    <ligand>
        <name>NAD(+)</name>
        <dbReference type="ChEBI" id="CHEBI:57540"/>
    </ligand>
</feature>
<feature type="binding site" evidence="2">
    <location>
        <position position="134"/>
    </location>
    <ligand>
        <name>substrate</name>
    </ligand>
</feature>
<feature type="binding site" evidence="2">
    <location>
        <position position="165"/>
    </location>
    <ligand>
        <name>substrate</name>
    </ligand>
</feature>
<accession>Q8XXW5</accession>
<organism>
    <name type="scientific">Ralstonia nicotianae (strain ATCC BAA-1114 / GMI1000)</name>
    <name type="common">Ralstonia solanacearum</name>
    <dbReference type="NCBI Taxonomy" id="267608"/>
    <lineage>
        <taxon>Bacteria</taxon>
        <taxon>Pseudomonadati</taxon>
        <taxon>Pseudomonadota</taxon>
        <taxon>Betaproteobacteria</taxon>
        <taxon>Burkholderiales</taxon>
        <taxon>Burkholderiaceae</taxon>
        <taxon>Ralstonia</taxon>
        <taxon>Ralstonia solanacearum species complex</taxon>
    </lineage>
</organism>
<proteinExistence type="inferred from homology"/>
<gene>
    <name evidence="2" type="primary">mdh</name>
    <name type="ordered locus">RSc1998</name>
    <name type="ORF">RS03566</name>
</gene>
<comment type="function">
    <text evidence="2">Catalyzes the reversible oxidation of malate to oxaloacetate.</text>
</comment>
<comment type="catalytic activity">
    <reaction evidence="2">
        <text>(S)-malate + NAD(+) = oxaloacetate + NADH + H(+)</text>
        <dbReference type="Rhea" id="RHEA:21432"/>
        <dbReference type="ChEBI" id="CHEBI:15378"/>
        <dbReference type="ChEBI" id="CHEBI:15589"/>
        <dbReference type="ChEBI" id="CHEBI:16452"/>
        <dbReference type="ChEBI" id="CHEBI:57540"/>
        <dbReference type="ChEBI" id="CHEBI:57945"/>
        <dbReference type="EC" id="1.1.1.37"/>
    </reaction>
</comment>
<comment type="similarity">
    <text evidence="2">Belongs to the LDH/MDH superfamily. MDH type 2 family.</text>
</comment>
<keyword id="KW-0520">NAD</keyword>
<keyword id="KW-0560">Oxidoreductase</keyword>
<keyword id="KW-1185">Reference proteome</keyword>
<keyword id="KW-0816">Tricarboxylic acid cycle</keyword>
<protein>
    <recommendedName>
        <fullName evidence="2">Malate dehydrogenase</fullName>
        <ecNumber evidence="2">1.1.1.37</ecNumber>
    </recommendedName>
</protein>
<reference key="1">
    <citation type="journal article" date="2002" name="Nature">
        <title>Genome sequence of the plant pathogen Ralstonia solanacearum.</title>
        <authorList>
            <person name="Salanoubat M."/>
            <person name="Genin S."/>
            <person name="Artiguenave F."/>
            <person name="Gouzy J."/>
            <person name="Mangenot S."/>
            <person name="Arlat M."/>
            <person name="Billault A."/>
            <person name="Brottier P."/>
            <person name="Camus J.-C."/>
            <person name="Cattolico L."/>
            <person name="Chandler M."/>
            <person name="Choisne N."/>
            <person name="Claudel-Renard C."/>
            <person name="Cunnac S."/>
            <person name="Demange N."/>
            <person name="Gaspin C."/>
            <person name="Lavie M."/>
            <person name="Moisan A."/>
            <person name="Robert C."/>
            <person name="Saurin W."/>
            <person name="Schiex T."/>
            <person name="Siguier P."/>
            <person name="Thebault P."/>
            <person name="Whalen M."/>
            <person name="Wincker P."/>
            <person name="Levy M."/>
            <person name="Weissenbach J."/>
            <person name="Boucher C.A."/>
        </authorList>
    </citation>
    <scope>NUCLEOTIDE SEQUENCE [LARGE SCALE GENOMIC DNA]</scope>
    <source>
        <strain>ATCC BAA-1114 / GMI1000</strain>
    </source>
</reference>
<evidence type="ECO:0000250" key="1"/>
<evidence type="ECO:0000255" key="2">
    <source>
        <dbReference type="HAMAP-Rule" id="MF_01517"/>
    </source>
</evidence>